<dbReference type="EMBL" id="DQ898156">
    <property type="protein sequence ID" value="ABI32444.1"/>
    <property type="molecule type" value="Genomic_DNA"/>
</dbReference>
<dbReference type="RefSeq" id="YP_740137.1">
    <property type="nucleotide sequence ID" value="NC_008325.1"/>
</dbReference>
<dbReference type="SMR" id="Q0G9U2"/>
<dbReference type="GeneID" id="4266765"/>
<dbReference type="GO" id="GO:0009535">
    <property type="term" value="C:chloroplast thylakoid membrane"/>
    <property type="evidence" value="ECO:0007669"/>
    <property type="project" value="UniProtKB-SubCell"/>
</dbReference>
<dbReference type="GO" id="GO:0009522">
    <property type="term" value="C:photosystem I"/>
    <property type="evidence" value="ECO:0007669"/>
    <property type="project" value="UniProtKB-KW"/>
</dbReference>
<dbReference type="GO" id="GO:0015979">
    <property type="term" value="P:photosynthesis"/>
    <property type="evidence" value="ECO:0007669"/>
    <property type="project" value="UniProtKB-UniRule"/>
</dbReference>
<dbReference type="FunFam" id="1.20.5.510:FF:000001">
    <property type="entry name" value="Photosystem I reaction center subunit IX"/>
    <property type="match status" value="1"/>
</dbReference>
<dbReference type="Gene3D" id="1.20.5.510">
    <property type="entry name" value="Single helix bin"/>
    <property type="match status" value="1"/>
</dbReference>
<dbReference type="HAMAP" id="MF_00522">
    <property type="entry name" value="PSI_PsaJ"/>
    <property type="match status" value="1"/>
</dbReference>
<dbReference type="InterPro" id="IPR002615">
    <property type="entry name" value="PSI_PsaJ"/>
</dbReference>
<dbReference type="InterPro" id="IPR036062">
    <property type="entry name" value="PSI_PsaJ_sf"/>
</dbReference>
<dbReference type="PANTHER" id="PTHR36082">
    <property type="match status" value="1"/>
</dbReference>
<dbReference type="PANTHER" id="PTHR36082:SF2">
    <property type="entry name" value="PHOTOSYSTEM I REACTION CENTER SUBUNIT IX"/>
    <property type="match status" value="1"/>
</dbReference>
<dbReference type="Pfam" id="PF01701">
    <property type="entry name" value="PSI_PsaJ"/>
    <property type="match status" value="1"/>
</dbReference>
<dbReference type="SUPFAM" id="SSF81544">
    <property type="entry name" value="Subunit IX of photosystem I reaction centre, PsaJ"/>
    <property type="match status" value="1"/>
</dbReference>
<geneLocation type="chloroplast"/>
<sequence>MRDLKTYLSVAPVLSTLWFGSLAGLLIEINRFFPDALTFPFF</sequence>
<reference key="1">
    <citation type="journal article" date="2006" name="BMC Genomics">
        <title>Complete plastid genome sequence of Daucus carota: implications for biotechnology and phylogeny of angiosperms.</title>
        <authorList>
            <person name="Ruhlman T."/>
            <person name="Lee S.-B."/>
            <person name="Jansen R.K."/>
            <person name="Hostetler J.B."/>
            <person name="Tallon L.J."/>
            <person name="Town C.D."/>
            <person name="Daniell H."/>
        </authorList>
    </citation>
    <scope>NUCLEOTIDE SEQUENCE [LARGE SCALE GENOMIC DNA]</scope>
    <source>
        <strain>cv. Danvers Half-long</strain>
    </source>
</reference>
<organism>
    <name type="scientific">Daucus carota</name>
    <name type="common">Wild carrot</name>
    <dbReference type="NCBI Taxonomy" id="4039"/>
    <lineage>
        <taxon>Eukaryota</taxon>
        <taxon>Viridiplantae</taxon>
        <taxon>Streptophyta</taxon>
        <taxon>Embryophyta</taxon>
        <taxon>Tracheophyta</taxon>
        <taxon>Spermatophyta</taxon>
        <taxon>Magnoliopsida</taxon>
        <taxon>eudicotyledons</taxon>
        <taxon>Gunneridae</taxon>
        <taxon>Pentapetalae</taxon>
        <taxon>asterids</taxon>
        <taxon>campanulids</taxon>
        <taxon>Apiales</taxon>
        <taxon>Apiaceae</taxon>
        <taxon>Apioideae</taxon>
        <taxon>Scandiceae</taxon>
        <taxon>Daucinae</taxon>
        <taxon>Daucus</taxon>
        <taxon>Daucus sect. Daucus</taxon>
    </lineage>
</organism>
<protein>
    <recommendedName>
        <fullName evidence="1">Photosystem I reaction center subunit IX</fullName>
    </recommendedName>
    <alternativeName>
        <fullName evidence="1">PSI-J</fullName>
    </alternativeName>
</protein>
<gene>
    <name evidence="1" type="primary">psaJ</name>
</gene>
<feature type="chain" id="PRO_0000276054" description="Photosystem I reaction center subunit IX">
    <location>
        <begin position="1"/>
        <end position="42"/>
    </location>
</feature>
<feature type="transmembrane region" description="Helical" evidence="1">
    <location>
        <begin position="7"/>
        <end position="27"/>
    </location>
</feature>
<evidence type="ECO:0000255" key="1">
    <source>
        <dbReference type="HAMAP-Rule" id="MF_00522"/>
    </source>
</evidence>
<accession>Q0G9U2</accession>
<keyword id="KW-0150">Chloroplast</keyword>
<keyword id="KW-0472">Membrane</keyword>
<keyword id="KW-0602">Photosynthesis</keyword>
<keyword id="KW-0603">Photosystem I</keyword>
<keyword id="KW-0934">Plastid</keyword>
<keyword id="KW-0793">Thylakoid</keyword>
<keyword id="KW-0812">Transmembrane</keyword>
<keyword id="KW-1133">Transmembrane helix</keyword>
<comment type="function">
    <text evidence="1">May help in the organization of the PsaE and PsaF subunits.</text>
</comment>
<comment type="subcellular location">
    <subcellularLocation>
        <location evidence="1">Plastid</location>
        <location evidence="1">Chloroplast thylakoid membrane</location>
        <topology evidence="1">Single-pass membrane protein</topology>
    </subcellularLocation>
</comment>
<comment type="similarity">
    <text evidence="1">Belongs to the PsaJ family.</text>
</comment>
<name>PSAJ_DAUCA</name>
<proteinExistence type="inferred from homology"/>